<reference key="1">
    <citation type="journal article" date="2007" name="PLoS ONE">
        <title>Analysis of the neurotoxin complex genes in Clostridium botulinum A1-A4 and B1 strains: BoNT/A3, /Ba4 and /B1 clusters are located within plasmids.</title>
        <authorList>
            <person name="Smith T.J."/>
            <person name="Hill K.K."/>
            <person name="Foley B.T."/>
            <person name="Detter J.C."/>
            <person name="Munk A.C."/>
            <person name="Bruce D.C."/>
            <person name="Doggett N.A."/>
            <person name="Smith L.A."/>
            <person name="Marks J.D."/>
            <person name="Xie G."/>
            <person name="Brettin T.S."/>
        </authorList>
    </citation>
    <scope>NUCLEOTIDE SEQUENCE [LARGE SCALE GENOMIC DNA]</scope>
    <source>
        <strain>Loch Maree / Type A3</strain>
    </source>
</reference>
<keyword id="KW-0143">Chaperone</keyword>
<keyword id="KW-0963">Cytoplasm</keyword>
<sequence length="95" mass="10141">MNIRPLGDRVVIKRVEAEETTKSGIVLPGAAKEKPQVAEVIAVGPGGLVDGKEVKMELKVGDKVLFSKYAGNEVKIEGEEVTILKQDDILAVVEG</sequence>
<comment type="function">
    <text evidence="1">Together with the chaperonin GroEL, plays an essential role in assisting protein folding. The GroEL-GroES system forms a nano-cage that allows encapsulation of the non-native substrate proteins and provides a physical environment optimized to promote and accelerate protein folding. GroES binds to the apical surface of the GroEL ring, thereby capping the opening of the GroEL channel.</text>
</comment>
<comment type="subunit">
    <text evidence="1">Heptamer of 7 subunits arranged in a ring. Interacts with the chaperonin GroEL.</text>
</comment>
<comment type="subcellular location">
    <subcellularLocation>
        <location evidence="1">Cytoplasm</location>
    </subcellularLocation>
</comment>
<comment type="similarity">
    <text evidence="1">Belongs to the GroES chaperonin family.</text>
</comment>
<name>CH10_CLOBM</name>
<dbReference type="EMBL" id="CP000962">
    <property type="protein sequence ID" value="ACA56438.1"/>
    <property type="molecule type" value="Genomic_DNA"/>
</dbReference>
<dbReference type="RefSeq" id="WP_003357350.1">
    <property type="nucleotide sequence ID" value="NC_010520.1"/>
</dbReference>
<dbReference type="SMR" id="B1L1K1"/>
<dbReference type="KEGG" id="cbl:CLK_2715"/>
<dbReference type="HOGENOM" id="CLU_132825_2_0_9"/>
<dbReference type="GO" id="GO:0005737">
    <property type="term" value="C:cytoplasm"/>
    <property type="evidence" value="ECO:0007669"/>
    <property type="project" value="UniProtKB-SubCell"/>
</dbReference>
<dbReference type="GO" id="GO:0005524">
    <property type="term" value="F:ATP binding"/>
    <property type="evidence" value="ECO:0007669"/>
    <property type="project" value="InterPro"/>
</dbReference>
<dbReference type="GO" id="GO:0046872">
    <property type="term" value="F:metal ion binding"/>
    <property type="evidence" value="ECO:0007669"/>
    <property type="project" value="TreeGrafter"/>
</dbReference>
<dbReference type="GO" id="GO:0044183">
    <property type="term" value="F:protein folding chaperone"/>
    <property type="evidence" value="ECO:0007669"/>
    <property type="project" value="InterPro"/>
</dbReference>
<dbReference type="GO" id="GO:0051087">
    <property type="term" value="F:protein-folding chaperone binding"/>
    <property type="evidence" value="ECO:0007669"/>
    <property type="project" value="TreeGrafter"/>
</dbReference>
<dbReference type="GO" id="GO:0051082">
    <property type="term" value="F:unfolded protein binding"/>
    <property type="evidence" value="ECO:0007669"/>
    <property type="project" value="TreeGrafter"/>
</dbReference>
<dbReference type="GO" id="GO:0051085">
    <property type="term" value="P:chaperone cofactor-dependent protein refolding"/>
    <property type="evidence" value="ECO:0007669"/>
    <property type="project" value="TreeGrafter"/>
</dbReference>
<dbReference type="CDD" id="cd00320">
    <property type="entry name" value="cpn10"/>
    <property type="match status" value="1"/>
</dbReference>
<dbReference type="FunFam" id="2.30.33.40:FF:000001">
    <property type="entry name" value="10 kDa chaperonin"/>
    <property type="match status" value="1"/>
</dbReference>
<dbReference type="Gene3D" id="2.30.33.40">
    <property type="entry name" value="GroES chaperonin"/>
    <property type="match status" value="1"/>
</dbReference>
<dbReference type="HAMAP" id="MF_00580">
    <property type="entry name" value="CH10"/>
    <property type="match status" value="1"/>
</dbReference>
<dbReference type="InterPro" id="IPR020818">
    <property type="entry name" value="Chaperonin_GroES"/>
</dbReference>
<dbReference type="InterPro" id="IPR037124">
    <property type="entry name" value="Chaperonin_GroES_sf"/>
</dbReference>
<dbReference type="InterPro" id="IPR018369">
    <property type="entry name" value="Chaprnonin_Cpn10_CS"/>
</dbReference>
<dbReference type="InterPro" id="IPR011032">
    <property type="entry name" value="GroES-like_sf"/>
</dbReference>
<dbReference type="NCBIfam" id="NF001527">
    <property type="entry name" value="PRK00364.1-2"/>
    <property type="match status" value="1"/>
</dbReference>
<dbReference type="NCBIfam" id="NF001531">
    <property type="entry name" value="PRK00364.2-2"/>
    <property type="match status" value="1"/>
</dbReference>
<dbReference type="NCBIfam" id="NF001533">
    <property type="entry name" value="PRK00364.2-4"/>
    <property type="match status" value="1"/>
</dbReference>
<dbReference type="PANTHER" id="PTHR10772">
    <property type="entry name" value="10 KDA HEAT SHOCK PROTEIN"/>
    <property type="match status" value="1"/>
</dbReference>
<dbReference type="PANTHER" id="PTHR10772:SF58">
    <property type="entry name" value="CO-CHAPERONIN GROES"/>
    <property type="match status" value="1"/>
</dbReference>
<dbReference type="Pfam" id="PF00166">
    <property type="entry name" value="Cpn10"/>
    <property type="match status" value="1"/>
</dbReference>
<dbReference type="PRINTS" id="PR00297">
    <property type="entry name" value="CHAPERONIN10"/>
</dbReference>
<dbReference type="SMART" id="SM00883">
    <property type="entry name" value="Cpn10"/>
    <property type="match status" value="1"/>
</dbReference>
<dbReference type="SUPFAM" id="SSF50129">
    <property type="entry name" value="GroES-like"/>
    <property type="match status" value="1"/>
</dbReference>
<dbReference type="PROSITE" id="PS00681">
    <property type="entry name" value="CHAPERONINS_CPN10"/>
    <property type="match status" value="1"/>
</dbReference>
<proteinExistence type="inferred from homology"/>
<gene>
    <name evidence="1" type="primary">groES</name>
    <name evidence="1" type="synonym">groS</name>
    <name type="ordered locus">CLK_2715</name>
</gene>
<feature type="chain" id="PRO_1000129643" description="Co-chaperonin GroES">
    <location>
        <begin position="1"/>
        <end position="95"/>
    </location>
</feature>
<evidence type="ECO:0000255" key="1">
    <source>
        <dbReference type="HAMAP-Rule" id="MF_00580"/>
    </source>
</evidence>
<protein>
    <recommendedName>
        <fullName evidence="1">Co-chaperonin GroES</fullName>
    </recommendedName>
    <alternativeName>
        <fullName evidence="1">10 kDa chaperonin</fullName>
    </alternativeName>
    <alternativeName>
        <fullName evidence="1">Chaperonin-10</fullName>
        <shortName evidence="1">Cpn10</shortName>
    </alternativeName>
</protein>
<organism>
    <name type="scientific">Clostridium botulinum (strain Loch Maree / Type A3)</name>
    <dbReference type="NCBI Taxonomy" id="498214"/>
    <lineage>
        <taxon>Bacteria</taxon>
        <taxon>Bacillati</taxon>
        <taxon>Bacillota</taxon>
        <taxon>Clostridia</taxon>
        <taxon>Eubacteriales</taxon>
        <taxon>Clostridiaceae</taxon>
        <taxon>Clostridium</taxon>
    </lineage>
</organism>
<accession>B1L1K1</accession>